<name>SFSA_SYNSC</name>
<comment type="similarity">
    <text evidence="1">Belongs to the SfsA family.</text>
</comment>
<gene>
    <name evidence="1" type="primary">sfsA</name>
    <name type="ordered locus">Syncc9605_0248</name>
</gene>
<accession>Q3AN08</accession>
<proteinExistence type="inferred from homology"/>
<feature type="chain" id="PRO_1000008040" description="Sugar fermentation stimulation protein homolog">
    <location>
        <begin position="1"/>
        <end position="254"/>
    </location>
</feature>
<organism>
    <name type="scientific">Synechococcus sp. (strain CC9605)</name>
    <dbReference type="NCBI Taxonomy" id="110662"/>
    <lineage>
        <taxon>Bacteria</taxon>
        <taxon>Bacillati</taxon>
        <taxon>Cyanobacteriota</taxon>
        <taxon>Cyanophyceae</taxon>
        <taxon>Synechococcales</taxon>
        <taxon>Synechococcaceae</taxon>
        <taxon>Synechococcus</taxon>
    </lineage>
</organism>
<reference key="1">
    <citation type="submission" date="2005-07" db="EMBL/GenBank/DDBJ databases">
        <title>Complete sequence of Synechococcus sp. CC9605.</title>
        <authorList>
            <consortium name="US DOE Joint Genome Institute"/>
            <person name="Copeland A."/>
            <person name="Lucas S."/>
            <person name="Lapidus A."/>
            <person name="Barry K."/>
            <person name="Detter J.C."/>
            <person name="Glavina T."/>
            <person name="Hammon N."/>
            <person name="Israni S."/>
            <person name="Pitluck S."/>
            <person name="Schmutz J."/>
            <person name="Martinez M."/>
            <person name="Larimer F."/>
            <person name="Land M."/>
            <person name="Kyrpides N."/>
            <person name="Ivanova N."/>
            <person name="Richardson P."/>
        </authorList>
    </citation>
    <scope>NUCLEOTIDE SEQUENCE [LARGE SCALE GENOMIC DNA]</scope>
    <source>
        <strain>CC9605</strain>
    </source>
</reference>
<dbReference type="EMBL" id="CP000110">
    <property type="protein sequence ID" value="ABB34024.1"/>
    <property type="molecule type" value="Genomic_DNA"/>
</dbReference>
<dbReference type="RefSeq" id="WP_011363278.1">
    <property type="nucleotide sequence ID" value="NC_007516.1"/>
</dbReference>
<dbReference type="SMR" id="Q3AN08"/>
<dbReference type="STRING" id="110662.Syncc9605_0248"/>
<dbReference type="KEGG" id="syd:Syncc9605_0248"/>
<dbReference type="eggNOG" id="COG1489">
    <property type="taxonomic scope" value="Bacteria"/>
</dbReference>
<dbReference type="HOGENOM" id="CLU_052299_2_0_3"/>
<dbReference type="OrthoDB" id="9802365at2"/>
<dbReference type="GO" id="GO:0003677">
    <property type="term" value="F:DNA binding"/>
    <property type="evidence" value="ECO:0007669"/>
    <property type="project" value="InterPro"/>
</dbReference>
<dbReference type="CDD" id="cd22359">
    <property type="entry name" value="SfsA-like_bacterial"/>
    <property type="match status" value="1"/>
</dbReference>
<dbReference type="Gene3D" id="2.40.50.580">
    <property type="match status" value="1"/>
</dbReference>
<dbReference type="Gene3D" id="3.40.1350.60">
    <property type="match status" value="1"/>
</dbReference>
<dbReference type="HAMAP" id="MF_00095">
    <property type="entry name" value="SfsA"/>
    <property type="match status" value="1"/>
</dbReference>
<dbReference type="InterPro" id="IPR005224">
    <property type="entry name" value="SfsA"/>
</dbReference>
<dbReference type="InterPro" id="IPR040452">
    <property type="entry name" value="SfsA_C"/>
</dbReference>
<dbReference type="InterPro" id="IPR041465">
    <property type="entry name" value="SfsA_N"/>
</dbReference>
<dbReference type="NCBIfam" id="TIGR00230">
    <property type="entry name" value="sfsA"/>
    <property type="match status" value="1"/>
</dbReference>
<dbReference type="PANTHER" id="PTHR30545">
    <property type="entry name" value="SUGAR FERMENTATION STIMULATION PROTEIN A"/>
    <property type="match status" value="1"/>
</dbReference>
<dbReference type="PANTHER" id="PTHR30545:SF2">
    <property type="entry name" value="SUGAR FERMENTATION STIMULATION PROTEIN A"/>
    <property type="match status" value="1"/>
</dbReference>
<dbReference type="Pfam" id="PF03749">
    <property type="entry name" value="SfsA"/>
    <property type="match status" value="1"/>
</dbReference>
<dbReference type="Pfam" id="PF17746">
    <property type="entry name" value="SfsA_N"/>
    <property type="match status" value="1"/>
</dbReference>
<protein>
    <recommendedName>
        <fullName evidence="1">Sugar fermentation stimulation protein homolog</fullName>
    </recommendedName>
</protein>
<evidence type="ECO:0000255" key="1">
    <source>
        <dbReference type="HAMAP-Rule" id="MF_00095"/>
    </source>
</evidence>
<sequence length="254" mass="27694">MTGLSSPGDALLRFEPLTEGVLLKRYKRFLADVELSSGETVTAHCANTGPMTGVLIPGQRVRLRYAPSPKRKLAWTWEQAEVPGADGQHCWVGINTALPNRLIRATVEAGCLEAQLGAIARIRAEVAYGTNKRSRIDLLLTPAEQNPDQRPIYLEVKNTTWTDGSTALFPDTVTERGQKHLIELMGVLPDARAVLVPCLSRPDVTAFAPGDSADPRYGELFRQATNSGVEVLPCCFSFSADAVHWQGTRLVDLG</sequence>